<reference key="1">
    <citation type="journal article" date="2010" name="PLoS ONE">
        <title>The complete multipartite genome sequence of Cupriavidus necator JMP134, a versatile pollutant degrader.</title>
        <authorList>
            <person name="Lykidis A."/>
            <person name="Perez-Pantoja D."/>
            <person name="Ledger T."/>
            <person name="Mavromatis K."/>
            <person name="Anderson I.J."/>
            <person name="Ivanova N.N."/>
            <person name="Hooper S.D."/>
            <person name="Lapidus A."/>
            <person name="Lucas S."/>
            <person name="Gonzalez B."/>
            <person name="Kyrpides N.C."/>
        </authorList>
    </citation>
    <scope>NUCLEOTIDE SEQUENCE [LARGE SCALE GENOMIC DNA]</scope>
    <source>
        <strain>JMP134 / LMG 1197</strain>
    </source>
</reference>
<name>ACDH_CUPPJ</name>
<accession>Q46NW7</accession>
<sequence>MATRKLKAAIIGSGNIGTDLMIKILRHGKHLEMGAMVGIDPASDGLARAARMGVATTHEGVEGLISLPNFADIDVVFDATSAGAHVKNDARLREVKPGIRMIDLTPAAIGPYCVPVVNLDDRLDALNVNMVTCGGQATIPMVAAVSRVAKVHYAEIVASISSKSAGPGTRANIDEFTETTSKAIEVIGGAAKGKAIIVLNPAEPPLIMRDTVYVLSAAANRAEVEASIEEMAAAVQQYVPGYRLKQKVQFDEIPASAPLNIPGLGKFSGLKTSVFLEVEGAAHYLPAYAGNLDIMTSAALATAERMAQAALTA</sequence>
<feature type="chain" id="PRO_0000337984" description="Acetaldehyde dehydrogenase">
    <location>
        <begin position="1"/>
        <end position="313"/>
    </location>
</feature>
<feature type="active site" description="Acyl-thioester intermediate" evidence="1">
    <location>
        <position position="133"/>
    </location>
</feature>
<feature type="binding site" evidence="1">
    <location>
        <begin position="13"/>
        <end position="16"/>
    </location>
    <ligand>
        <name>NAD(+)</name>
        <dbReference type="ChEBI" id="CHEBI:57540"/>
    </ligand>
</feature>
<feature type="binding site" evidence="1">
    <location>
        <begin position="164"/>
        <end position="172"/>
    </location>
    <ligand>
        <name>NAD(+)</name>
        <dbReference type="ChEBI" id="CHEBI:57540"/>
    </ligand>
</feature>
<feature type="binding site" evidence="1">
    <location>
        <position position="291"/>
    </location>
    <ligand>
        <name>NAD(+)</name>
        <dbReference type="ChEBI" id="CHEBI:57540"/>
    </ligand>
</feature>
<proteinExistence type="inferred from homology"/>
<protein>
    <recommendedName>
        <fullName evidence="1">Acetaldehyde dehydrogenase</fullName>
        <ecNumber evidence="1">1.2.1.10</ecNumber>
    </recommendedName>
    <alternativeName>
        <fullName evidence="1">Acetaldehyde dehydrogenase [acetylating]</fullName>
    </alternativeName>
</protein>
<evidence type="ECO:0000255" key="1">
    <source>
        <dbReference type="HAMAP-Rule" id="MF_01657"/>
    </source>
</evidence>
<dbReference type="EC" id="1.2.1.10" evidence="1"/>
<dbReference type="EMBL" id="CP000091">
    <property type="protein sequence ID" value="AAZ65167.1"/>
    <property type="molecule type" value="Genomic_DNA"/>
</dbReference>
<dbReference type="SMR" id="Q46NW7"/>
<dbReference type="STRING" id="264198.Reut_B5824"/>
<dbReference type="KEGG" id="reu:Reut_B5824"/>
<dbReference type="eggNOG" id="COG4569">
    <property type="taxonomic scope" value="Bacteria"/>
</dbReference>
<dbReference type="HOGENOM" id="CLU_062208_0_0_4"/>
<dbReference type="OrthoDB" id="9786743at2"/>
<dbReference type="GO" id="GO:0008774">
    <property type="term" value="F:acetaldehyde dehydrogenase (acetylating) activity"/>
    <property type="evidence" value="ECO:0007669"/>
    <property type="project" value="UniProtKB-UniRule"/>
</dbReference>
<dbReference type="GO" id="GO:0051287">
    <property type="term" value="F:NAD binding"/>
    <property type="evidence" value="ECO:0007669"/>
    <property type="project" value="UniProtKB-UniRule"/>
</dbReference>
<dbReference type="GO" id="GO:0009056">
    <property type="term" value="P:catabolic process"/>
    <property type="evidence" value="ECO:0007669"/>
    <property type="project" value="UniProtKB-KW"/>
</dbReference>
<dbReference type="CDD" id="cd23933">
    <property type="entry name" value="ALDH_C"/>
    <property type="match status" value="1"/>
</dbReference>
<dbReference type="FunFam" id="3.30.360.10:FF:000021">
    <property type="entry name" value="Acetaldehyde dehydrogenase"/>
    <property type="match status" value="1"/>
</dbReference>
<dbReference type="Gene3D" id="3.30.360.10">
    <property type="entry name" value="Dihydrodipicolinate Reductase, domain 2"/>
    <property type="match status" value="1"/>
</dbReference>
<dbReference type="Gene3D" id="3.40.50.720">
    <property type="entry name" value="NAD(P)-binding Rossmann-like Domain"/>
    <property type="match status" value="1"/>
</dbReference>
<dbReference type="HAMAP" id="MF_01657">
    <property type="entry name" value="Ac_ald_DH_ac"/>
    <property type="match status" value="1"/>
</dbReference>
<dbReference type="InterPro" id="IPR003361">
    <property type="entry name" value="Acetaldehyde_dehydrogenase"/>
</dbReference>
<dbReference type="InterPro" id="IPR015426">
    <property type="entry name" value="Acetylaldehyde_DH_C"/>
</dbReference>
<dbReference type="InterPro" id="IPR036291">
    <property type="entry name" value="NAD(P)-bd_dom_sf"/>
</dbReference>
<dbReference type="InterPro" id="IPR000534">
    <property type="entry name" value="Semialdehyde_DH_NAD-bd"/>
</dbReference>
<dbReference type="NCBIfam" id="TIGR03215">
    <property type="entry name" value="ac_ald_DH_ac"/>
    <property type="match status" value="1"/>
</dbReference>
<dbReference type="NCBIfam" id="NF006157">
    <property type="entry name" value="PRK08300.1"/>
    <property type="match status" value="1"/>
</dbReference>
<dbReference type="Pfam" id="PF09290">
    <property type="entry name" value="AcetDehyd-dimer"/>
    <property type="match status" value="1"/>
</dbReference>
<dbReference type="Pfam" id="PF01118">
    <property type="entry name" value="Semialdhyde_dh"/>
    <property type="match status" value="1"/>
</dbReference>
<dbReference type="PIRSF" id="PIRSF015689">
    <property type="entry name" value="Actaldh_dh_actl"/>
    <property type="match status" value="1"/>
</dbReference>
<dbReference type="SMART" id="SM00859">
    <property type="entry name" value="Semialdhyde_dh"/>
    <property type="match status" value="1"/>
</dbReference>
<dbReference type="SUPFAM" id="SSF55347">
    <property type="entry name" value="Glyceraldehyde-3-phosphate dehydrogenase-like, C-terminal domain"/>
    <property type="match status" value="1"/>
</dbReference>
<dbReference type="SUPFAM" id="SSF51735">
    <property type="entry name" value="NAD(P)-binding Rossmann-fold domains"/>
    <property type="match status" value="1"/>
</dbReference>
<gene>
    <name type="ordered locus">Reut_B5824</name>
</gene>
<keyword id="KW-0058">Aromatic hydrocarbons catabolism</keyword>
<keyword id="KW-0520">NAD</keyword>
<keyword id="KW-0560">Oxidoreductase</keyword>
<comment type="catalytic activity">
    <reaction evidence="1">
        <text>acetaldehyde + NAD(+) + CoA = acetyl-CoA + NADH + H(+)</text>
        <dbReference type="Rhea" id="RHEA:23288"/>
        <dbReference type="ChEBI" id="CHEBI:15343"/>
        <dbReference type="ChEBI" id="CHEBI:15378"/>
        <dbReference type="ChEBI" id="CHEBI:57287"/>
        <dbReference type="ChEBI" id="CHEBI:57288"/>
        <dbReference type="ChEBI" id="CHEBI:57540"/>
        <dbReference type="ChEBI" id="CHEBI:57945"/>
        <dbReference type="EC" id="1.2.1.10"/>
    </reaction>
</comment>
<comment type="similarity">
    <text evidence="1">Belongs to the acetaldehyde dehydrogenase family.</text>
</comment>
<organism>
    <name type="scientific">Cupriavidus pinatubonensis (strain JMP 134 / LMG 1197)</name>
    <name type="common">Cupriavidus necator (strain JMP 134)</name>
    <dbReference type="NCBI Taxonomy" id="264198"/>
    <lineage>
        <taxon>Bacteria</taxon>
        <taxon>Pseudomonadati</taxon>
        <taxon>Pseudomonadota</taxon>
        <taxon>Betaproteobacteria</taxon>
        <taxon>Burkholderiales</taxon>
        <taxon>Burkholderiaceae</taxon>
        <taxon>Cupriavidus</taxon>
    </lineage>
</organism>